<reference key="1">
    <citation type="journal article" date="2000" name="Nature">
        <title>Sequence and analysis of chromosome 1 of the plant Arabidopsis thaliana.</title>
        <authorList>
            <person name="Theologis A."/>
            <person name="Ecker J.R."/>
            <person name="Palm C.J."/>
            <person name="Federspiel N.A."/>
            <person name="Kaul S."/>
            <person name="White O."/>
            <person name="Alonso J."/>
            <person name="Altafi H."/>
            <person name="Araujo R."/>
            <person name="Bowman C.L."/>
            <person name="Brooks S.Y."/>
            <person name="Buehler E."/>
            <person name="Chan A."/>
            <person name="Chao Q."/>
            <person name="Chen H."/>
            <person name="Cheuk R.F."/>
            <person name="Chin C.W."/>
            <person name="Chung M.K."/>
            <person name="Conn L."/>
            <person name="Conway A.B."/>
            <person name="Conway A.R."/>
            <person name="Creasy T.H."/>
            <person name="Dewar K."/>
            <person name="Dunn P."/>
            <person name="Etgu P."/>
            <person name="Feldblyum T.V."/>
            <person name="Feng J.-D."/>
            <person name="Fong B."/>
            <person name="Fujii C.Y."/>
            <person name="Gill J.E."/>
            <person name="Goldsmith A.D."/>
            <person name="Haas B."/>
            <person name="Hansen N.F."/>
            <person name="Hughes B."/>
            <person name="Huizar L."/>
            <person name="Hunter J.L."/>
            <person name="Jenkins J."/>
            <person name="Johnson-Hopson C."/>
            <person name="Khan S."/>
            <person name="Khaykin E."/>
            <person name="Kim C.J."/>
            <person name="Koo H.L."/>
            <person name="Kremenetskaia I."/>
            <person name="Kurtz D.B."/>
            <person name="Kwan A."/>
            <person name="Lam B."/>
            <person name="Langin-Hooper S."/>
            <person name="Lee A."/>
            <person name="Lee J.M."/>
            <person name="Lenz C.A."/>
            <person name="Li J.H."/>
            <person name="Li Y.-P."/>
            <person name="Lin X."/>
            <person name="Liu S.X."/>
            <person name="Liu Z.A."/>
            <person name="Luros J.S."/>
            <person name="Maiti R."/>
            <person name="Marziali A."/>
            <person name="Militscher J."/>
            <person name="Miranda M."/>
            <person name="Nguyen M."/>
            <person name="Nierman W.C."/>
            <person name="Osborne B.I."/>
            <person name="Pai G."/>
            <person name="Peterson J."/>
            <person name="Pham P.K."/>
            <person name="Rizzo M."/>
            <person name="Rooney T."/>
            <person name="Rowley D."/>
            <person name="Sakano H."/>
            <person name="Salzberg S.L."/>
            <person name="Schwartz J.R."/>
            <person name="Shinn P."/>
            <person name="Southwick A.M."/>
            <person name="Sun H."/>
            <person name="Tallon L.J."/>
            <person name="Tambunga G."/>
            <person name="Toriumi M.J."/>
            <person name="Town C.D."/>
            <person name="Utterback T."/>
            <person name="Van Aken S."/>
            <person name="Vaysberg M."/>
            <person name="Vysotskaia V.S."/>
            <person name="Walker M."/>
            <person name="Wu D."/>
            <person name="Yu G."/>
            <person name="Fraser C.M."/>
            <person name="Venter J.C."/>
            <person name="Davis R.W."/>
        </authorList>
    </citation>
    <scope>NUCLEOTIDE SEQUENCE [LARGE SCALE GENOMIC DNA]</scope>
    <source>
        <strain>cv. Columbia</strain>
    </source>
</reference>
<reference key="2">
    <citation type="journal article" date="2017" name="Plant J.">
        <title>Araport11: a complete reannotation of the Arabidopsis thaliana reference genome.</title>
        <authorList>
            <person name="Cheng C.Y."/>
            <person name="Krishnakumar V."/>
            <person name="Chan A.P."/>
            <person name="Thibaud-Nissen F."/>
            <person name="Schobel S."/>
            <person name="Town C.D."/>
        </authorList>
    </citation>
    <scope>GENOME REANNOTATION</scope>
    <source>
        <strain>cv. Columbia</strain>
    </source>
</reference>
<reference key="3">
    <citation type="submission" date="2006-09" db="EMBL/GenBank/DDBJ databases">
        <title>Arabidopsis ORF clones.</title>
        <authorList>
            <person name="Bautista V.R."/>
            <person name="Kim C.J."/>
            <person name="Chen H."/>
            <person name="Quinitio C."/>
            <person name="Ecker J.R."/>
        </authorList>
    </citation>
    <scope>NUCLEOTIDE SEQUENCE [LARGE SCALE MRNA]</scope>
    <source>
        <strain>cv. Columbia</strain>
    </source>
</reference>
<reference key="4">
    <citation type="submission" date="2002-03" db="EMBL/GenBank/DDBJ databases">
        <title>Full-length cDNA from Arabidopsis thaliana.</title>
        <authorList>
            <person name="Brover V.V."/>
            <person name="Troukhan M.E."/>
            <person name="Alexandrov N.A."/>
            <person name="Lu Y.-P."/>
            <person name="Flavell R.B."/>
            <person name="Feldmann K.A."/>
        </authorList>
    </citation>
    <scope>NUCLEOTIDE SEQUENCE [LARGE SCALE MRNA]</scope>
</reference>
<reference key="5">
    <citation type="journal article" date="2003" name="J. Mol. Evol.">
        <title>The carboxylesterase gene family from Arabidopsis thaliana.</title>
        <authorList>
            <person name="Marshall S.D."/>
            <person name="Putterill J.J."/>
            <person name="Plummer K.M."/>
            <person name="Newcomb R.D."/>
        </authorList>
    </citation>
    <scope>TISSUE SPECIFICITY</scope>
    <scope>GENE FAMILY</scope>
    <scope>NOMENCLATURE</scope>
</reference>
<reference key="6">
    <citation type="journal article" date="2015" name="J. Exp. Bot.">
        <title>Identification of cleavage sites and substrate proteins for two mitochondrial intermediate peptidases in Arabidopsis thaliana.</title>
        <authorList>
            <person name="Carrie C."/>
            <person name="Venne A.S."/>
            <person name="Zahedi R.P."/>
            <person name="Soll J."/>
        </authorList>
    </citation>
    <scope>IDENTIFICATION BY MASS SPECTROMETRY</scope>
    <scope>CLEAVAGE OF TRANSIT PEPTIDE AFTER CYS-52</scope>
</reference>
<proteinExistence type="evidence at protein level"/>
<comment type="function">
    <text evidence="1">Carboxylesterase acting on esters with varying acyl chain length.</text>
</comment>
<comment type="catalytic activity">
    <reaction>
        <text>a carboxylic ester + H2O = an alcohol + a carboxylate + H(+)</text>
        <dbReference type="Rhea" id="RHEA:21164"/>
        <dbReference type="ChEBI" id="CHEBI:15377"/>
        <dbReference type="ChEBI" id="CHEBI:15378"/>
        <dbReference type="ChEBI" id="CHEBI:29067"/>
        <dbReference type="ChEBI" id="CHEBI:30879"/>
        <dbReference type="ChEBI" id="CHEBI:33308"/>
        <dbReference type="EC" id="3.1.1.1"/>
    </reaction>
</comment>
<comment type="subcellular location">
    <subcellularLocation>
        <location evidence="6">Mitochondrion</location>
    </subcellularLocation>
</comment>
<comment type="tissue specificity">
    <text evidence="3">Expressed in leaves, stems, flowers and siliques.</text>
</comment>
<comment type="similarity">
    <text evidence="5">Belongs to the 'GDXG' lipolytic enzyme family.</text>
</comment>
<gene>
    <name type="primary">CXE4</name>
    <name type="ordered locus">At1g49650</name>
    <name type="ORF">F14J22.21</name>
</gene>
<accession>Q9FX93</accession>
<accession>Q8LF34</accession>
<dbReference type="EC" id="3.1.1.1"/>
<dbReference type="EMBL" id="AC011807">
    <property type="protein sequence ID" value="AAG13051.1"/>
    <property type="molecule type" value="Genomic_DNA"/>
</dbReference>
<dbReference type="EMBL" id="CP002684">
    <property type="protein sequence ID" value="AEE32455.1"/>
    <property type="molecule type" value="Genomic_DNA"/>
</dbReference>
<dbReference type="EMBL" id="BT029001">
    <property type="protein sequence ID" value="ABI93910.1"/>
    <property type="molecule type" value="mRNA"/>
</dbReference>
<dbReference type="EMBL" id="AY085072">
    <property type="protein sequence ID" value="AAM61628.1"/>
    <property type="molecule type" value="mRNA"/>
</dbReference>
<dbReference type="RefSeq" id="NP_564550.1">
    <property type="nucleotide sequence ID" value="NM_103853.5"/>
</dbReference>
<dbReference type="SMR" id="Q9FX93"/>
<dbReference type="FunCoup" id="Q9FX93">
    <property type="interactions" value="34"/>
</dbReference>
<dbReference type="ESTHER" id="arath-Q8LF34">
    <property type="family name" value="Plant_carboxylesterase"/>
</dbReference>
<dbReference type="PaxDb" id="3702-AT1G49650.1"/>
<dbReference type="ProteomicsDB" id="220515"/>
<dbReference type="EnsemblPlants" id="AT1G49650.1">
    <property type="protein sequence ID" value="AT1G49650.1"/>
    <property type="gene ID" value="AT1G49650"/>
</dbReference>
<dbReference type="GeneID" id="841389"/>
<dbReference type="Gramene" id="AT1G49650.1">
    <property type="protein sequence ID" value="AT1G49650.1"/>
    <property type="gene ID" value="AT1G49650"/>
</dbReference>
<dbReference type="KEGG" id="ath:AT1G49650"/>
<dbReference type="Araport" id="AT1G49650"/>
<dbReference type="TAIR" id="AT1G49650"/>
<dbReference type="eggNOG" id="KOG1515">
    <property type="taxonomic scope" value="Eukaryota"/>
</dbReference>
<dbReference type="HOGENOM" id="CLU_012494_22_0_1"/>
<dbReference type="InParanoid" id="Q9FX93"/>
<dbReference type="OMA" id="PVEWINK"/>
<dbReference type="PhylomeDB" id="Q9FX93"/>
<dbReference type="BioCyc" id="ARA:AT1G49650-MONOMER"/>
<dbReference type="PRO" id="PR:Q9FX93"/>
<dbReference type="Proteomes" id="UP000006548">
    <property type="component" value="Chromosome 1"/>
</dbReference>
<dbReference type="ExpressionAtlas" id="Q9FX93">
    <property type="expression patterns" value="baseline and differential"/>
</dbReference>
<dbReference type="GO" id="GO:0005829">
    <property type="term" value="C:cytosol"/>
    <property type="evidence" value="ECO:0007005"/>
    <property type="project" value="TAIR"/>
</dbReference>
<dbReference type="GO" id="GO:0005739">
    <property type="term" value="C:mitochondrion"/>
    <property type="evidence" value="ECO:0007669"/>
    <property type="project" value="UniProtKB-SubCell"/>
</dbReference>
<dbReference type="GO" id="GO:0106435">
    <property type="term" value="F:carboxylesterase activity"/>
    <property type="evidence" value="ECO:0007669"/>
    <property type="project" value="UniProtKB-EC"/>
</dbReference>
<dbReference type="Gene3D" id="3.40.50.1820">
    <property type="entry name" value="alpha/beta hydrolase"/>
    <property type="match status" value="1"/>
</dbReference>
<dbReference type="InterPro" id="IPR013094">
    <property type="entry name" value="AB_hydrolase_3"/>
</dbReference>
<dbReference type="InterPro" id="IPR029058">
    <property type="entry name" value="AB_hydrolase_fold"/>
</dbReference>
<dbReference type="InterPro" id="IPR050466">
    <property type="entry name" value="Carboxylest/Gibb_receptor"/>
</dbReference>
<dbReference type="PANTHER" id="PTHR23024">
    <property type="entry name" value="ARYLACETAMIDE DEACETYLASE"/>
    <property type="match status" value="1"/>
</dbReference>
<dbReference type="PANTHER" id="PTHR23024:SF507">
    <property type="entry name" value="CARBOXYLESTERASE 4, MITOCHONDRIAL-RELATED"/>
    <property type="match status" value="1"/>
</dbReference>
<dbReference type="Pfam" id="PF07859">
    <property type="entry name" value="Abhydrolase_3"/>
    <property type="match status" value="1"/>
</dbReference>
<dbReference type="SUPFAM" id="SSF53474">
    <property type="entry name" value="alpha/beta-Hydrolases"/>
    <property type="match status" value="1"/>
</dbReference>
<organism>
    <name type="scientific">Arabidopsis thaliana</name>
    <name type="common">Mouse-ear cress</name>
    <dbReference type="NCBI Taxonomy" id="3702"/>
    <lineage>
        <taxon>Eukaryota</taxon>
        <taxon>Viridiplantae</taxon>
        <taxon>Streptophyta</taxon>
        <taxon>Embryophyta</taxon>
        <taxon>Tracheophyta</taxon>
        <taxon>Spermatophyta</taxon>
        <taxon>Magnoliopsida</taxon>
        <taxon>eudicotyledons</taxon>
        <taxon>Gunneridae</taxon>
        <taxon>Pentapetalae</taxon>
        <taxon>rosids</taxon>
        <taxon>malvids</taxon>
        <taxon>Brassicales</taxon>
        <taxon>Brassicaceae</taxon>
        <taxon>Camelineae</taxon>
        <taxon>Arabidopsis</taxon>
    </lineage>
</organism>
<evidence type="ECO:0000250" key="1"/>
<evidence type="ECO:0000250" key="2">
    <source>
        <dbReference type="UniProtKB" id="Q5NUF3"/>
    </source>
</evidence>
<evidence type="ECO:0000269" key="3">
    <source>
    </source>
</evidence>
<evidence type="ECO:0000269" key="4">
    <source>
    </source>
</evidence>
<evidence type="ECO:0000305" key="5"/>
<evidence type="ECO:0000305" key="6">
    <source>
    </source>
</evidence>
<protein>
    <recommendedName>
        <fullName>Probable carboxylesterase 4, mitochondrial</fullName>
    </recommendedName>
    <alternativeName>
        <fullName>AtCXE4</fullName>
        <ecNumber>3.1.1.1</ecNumber>
    </alternativeName>
</protein>
<keyword id="KW-0378">Hydrolase</keyword>
<keyword id="KW-0496">Mitochondrion</keyword>
<keyword id="KW-1185">Reference proteome</keyword>
<keyword id="KW-0719">Serine esterase</keyword>
<keyword id="KW-0809">Transit peptide</keyword>
<sequence>MLRRITCSSSLASPSLFLRFFRQLPRSYSSPTTIAVSGRNIRRLSTPTTLRCICSHSSSEIISEHPPFVRVYKDGRIERLSGTETVPASLNPRNDVVSKDVVYSPGHNLSVRLFLPHKSTQLAAGNKLPLLIYFHGGAWINESPFSPIYHNFLTEVVKSANCLAVSVQYRRAPEDPVPAAYEDTWSAIQWIFSHSCGSGEEDWINKYADFERVFLAGDSAGGNISHHMAMRAGKEKLKPRIKGTVIVHPAIWGKDPVDEHDVQDREIRDGVAEVWEKIVSPNSVDGADDPWFNVVGSGSNFSGMGCDKVLVEVAGKDVFWRQGLAYAAKLKKSGWKGEVEVIEEEDEEHCFHLLNPSSENAPSFMKRFVEFITG</sequence>
<feature type="transit peptide" description="Mitochondrion" evidence="4">
    <location>
        <begin position="1"/>
        <end position="52"/>
    </location>
</feature>
<feature type="chain" id="PRO_0000402550" description="Probable carboxylesterase 4, mitochondrial">
    <location>
        <begin position="53"/>
        <end position="374"/>
    </location>
</feature>
<feature type="short sequence motif" description="Involved in the stabilization of the negatively charged intermediate by the formation of the oxyanion hole" evidence="2">
    <location>
        <begin position="135"/>
        <end position="137"/>
    </location>
</feature>
<feature type="active site" evidence="2">
    <location>
        <position position="219"/>
    </location>
</feature>
<feature type="active site" evidence="2">
    <location>
        <position position="317"/>
    </location>
</feature>
<feature type="active site" evidence="2">
    <location>
        <position position="349"/>
    </location>
</feature>
<feature type="sequence conflict" description="In Ref. 4; AAM61628." evidence="5" ref="4">
    <original>C</original>
    <variation>D</variation>
    <location>
        <position position="196"/>
    </location>
</feature>
<feature type="sequence conflict" description="In Ref. 4; AAM61628." evidence="5" ref="4">
    <original>R</original>
    <variation>K</variation>
    <location>
        <position position="212"/>
    </location>
</feature>
<feature type="sequence conflict" description="In Ref. 4; AAM61628." evidence="5" ref="4">
    <original>V</original>
    <variation>I</variation>
    <location>
        <position position="274"/>
    </location>
</feature>
<feature type="sequence conflict" description="In Ref. 4; AAM61628." evidence="5" ref="4">
    <original>N</original>
    <variation>D</variation>
    <location>
        <position position="300"/>
    </location>
</feature>
<feature type="sequence conflict" description="In Ref. 4; AAM61628." evidence="5" ref="4">
    <original>D</original>
    <variation>E</variation>
    <location>
        <position position="307"/>
    </location>
</feature>
<feature type="sequence conflict" description="In Ref. 4; AAM61628." evidence="5" ref="4">
    <original>A</original>
    <variation>E</variation>
    <location>
        <position position="328"/>
    </location>
</feature>
<feature type="sequence conflict" description="In Ref. 4; AAM61628." evidence="5" ref="4">
    <original>F</original>
    <variation>L</variation>
    <location>
        <position position="368"/>
    </location>
</feature>
<name>CXE4_ARATH</name>